<dbReference type="EMBL" id="CP001601">
    <property type="protein sequence ID" value="ACP33093.1"/>
    <property type="molecule type" value="Genomic_DNA"/>
</dbReference>
<dbReference type="RefSeq" id="WP_010190289.1">
    <property type="nucleotide sequence ID" value="NC_012590.1"/>
</dbReference>
<dbReference type="SMR" id="C3PGY9"/>
<dbReference type="STRING" id="548476.cauri_1500"/>
<dbReference type="GeneID" id="31924130"/>
<dbReference type="KEGG" id="car:cauri_1500"/>
<dbReference type="eggNOG" id="COG0468">
    <property type="taxonomic scope" value="Bacteria"/>
</dbReference>
<dbReference type="HOGENOM" id="CLU_040469_3_2_11"/>
<dbReference type="OrthoDB" id="9776733at2"/>
<dbReference type="Proteomes" id="UP000002077">
    <property type="component" value="Chromosome"/>
</dbReference>
<dbReference type="GO" id="GO:0005829">
    <property type="term" value="C:cytosol"/>
    <property type="evidence" value="ECO:0007669"/>
    <property type="project" value="TreeGrafter"/>
</dbReference>
<dbReference type="GO" id="GO:0005524">
    <property type="term" value="F:ATP binding"/>
    <property type="evidence" value="ECO:0007669"/>
    <property type="project" value="UniProtKB-UniRule"/>
</dbReference>
<dbReference type="GO" id="GO:0016887">
    <property type="term" value="F:ATP hydrolysis activity"/>
    <property type="evidence" value="ECO:0007669"/>
    <property type="project" value="InterPro"/>
</dbReference>
<dbReference type="GO" id="GO:0140664">
    <property type="term" value="F:ATP-dependent DNA damage sensor activity"/>
    <property type="evidence" value="ECO:0007669"/>
    <property type="project" value="InterPro"/>
</dbReference>
<dbReference type="GO" id="GO:0003684">
    <property type="term" value="F:damaged DNA binding"/>
    <property type="evidence" value="ECO:0007669"/>
    <property type="project" value="UniProtKB-UniRule"/>
</dbReference>
<dbReference type="GO" id="GO:0003697">
    <property type="term" value="F:single-stranded DNA binding"/>
    <property type="evidence" value="ECO:0007669"/>
    <property type="project" value="UniProtKB-UniRule"/>
</dbReference>
<dbReference type="GO" id="GO:0006310">
    <property type="term" value="P:DNA recombination"/>
    <property type="evidence" value="ECO:0007669"/>
    <property type="project" value="UniProtKB-UniRule"/>
</dbReference>
<dbReference type="GO" id="GO:0006281">
    <property type="term" value="P:DNA repair"/>
    <property type="evidence" value="ECO:0007669"/>
    <property type="project" value="UniProtKB-UniRule"/>
</dbReference>
<dbReference type="GO" id="GO:0009432">
    <property type="term" value="P:SOS response"/>
    <property type="evidence" value="ECO:0007669"/>
    <property type="project" value="UniProtKB-UniRule"/>
</dbReference>
<dbReference type="CDD" id="cd00983">
    <property type="entry name" value="RecA"/>
    <property type="match status" value="1"/>
</dbReference>
<dbReference type="FunFam" id="3.40.50.300:FF:000087">
    <property type="entry name" value="Recombinase RecA"/>
    <property type="match status" value="1"/>
</dbReference>
<dbReference type="Gene3D" id="3.40.50.300">
    <property type="entry name" value="P-loop containing nucleotide triphosphate hydrolases"/>
    <property type="match status" value="1"/>
</dbReference>
<dbReference type="HAMAP" id="MF_00268">
    <property type="entry name" value="RecA"/>
    <property type="match status" value="1"/>
</dbReference>
<dbReference type="InterPro" id="IPR003593">
    <property type="entry name" value="AAA+_ATPase"/>
</dbReference>
<dbReference type="InterPro" id="IPR013765">
    <property type="entry name" value="DNA_recomb/repair_RecA"/>
</dbReference>
<dbReference type="InterPro" id="IPR020584">
    <property type="entry name" value="DNA_recomb/repair_RecA_CS"/>
</dbReference>
<dbReference type="InterPro" id="IPR027417">
    <property type="entry name" value="P-loop_NTPase"/>
</dbReference>
<dbReference type="InterPro" id="IPR049261">
    <property type="entry name" value="RecA-like_C"/>
</dbReference>
<dbReference type="InterPro" id="IPR049428">
    <property type="entry name" value="RecA-like_N"/>
</dbReference>
<dbReference type="InterPro" id="IPR020588">
    <property type="entry name" value="RecA_ATP-bd"/>
</dbReference>
<dbReference type="InterPro" id="IPR023400">
    <property type="entry name" value="RecA_C_sf"/>
</dbReference>
<dbReference type="InterPro" id="IPR020587">
    <property type="entry name" value="RecA_monomer-monomer_interface"/>
</dbReference>
<dbReference type="NCBIfam" id="TIGR02012">
    <property type="entry name" value="tigrfam_recA"/>
    <property type="match status" value="1"/>
</dbReference>
<dbReference type="PANTHER" id="PTHR45900:SF1">
    <property type="entry name" value="MITOCHONDRIAL DNA REPAIR PROTEIN RECA HOMOLOG-RELATED"/>
    <property type="match status" value="1"/>
</dbReference>
<dbReference type="PANTHER" id="PTHR45900">
    <property type="entry name" value="RECA"/>
    <property type="match status" value="1"/>
</dbReference>
<dbReference type="Pfam" id="PF00154">
    <property type="entry name" value="RecA"/>
    <property type="match status" value="1"/>
</dbReference>
<dbReference type="Pfam" id="PF21096">
    <property type="entry name" value="RecA_C"/>
    <property type="match status" value="1"/>
</dbReference>
<dbReference type="PRINTS" id="PR00142">
    <property type="entry name" value="RECA"/>
</dbReference>
<dbReference type="SMART" id="SM00382">
    <property type="entry name" value="AAA"/>
    <property type="match status" value="1"/>
</dbReference>
<dbReference type="SUPFAM" id="SSF52540">
    <property type="entry name" value="P-loop containing nucleoside triphosphate hydrolases"/>
    <property type="match status" value="1"/>
</dbReference>
<dbReference type="SUPFAM" id="SSF54752">
    <property type="entry name" value="RecA protein, C-terminal domain"/>
    <property type="match status" value="1"/>
</dbReference>
<dbReference type="PROSITE" id="PS00321">
    <property type="entry name" value="RECA_1"/>
    <property type="match status" value="1"/>
</dbReference>
<dbReference type="PROSITE" id="PS50162">
    <property type="entry name" value="RECA_2"/>
    <property type="match status" value="1"/>
</dbReference>
<dbReference type="PROSITE" id="PS50163">
    <property type="entry name" value="RECA_3"/>
    <property type="match status" value="1"/>
</dbReference>
<comment type="function">
    <text evidence="1">Can catalyze the hydrolysis of ATP in the presence of single-stranded DNA, the ATP-dependent uptake of single-stranded DNA by duplex DNA, and the ATP-dependent hybridization of homologous single-stranded DNAs. It interacts with LexA causing its activation and leading to its autocatalytic cleavage.</text>
</comment>
<comment type="subcellular location">
    <subcellularLocation>
        <location evidence="1">Cytoplasm</location>
    </subcellularLocation>
</comment>
<comment type="similarity">
    <text evidence="1">Belongs to the RecA family.</text>
</comment>
<organism>
    <name type="scientific">Corynebacterium aurimucosum (strain ATCC 700975 / DSM 44827 / CIP 107346 / CN-1)</name>
    <name type="common">Corynebacterium nigricans</name>
    <dbReference type="NCBI Taxonomy" id="548476"/>
    <lineage>
        <taxon>Bacteria</taxon>
        <taxon>Bacillati</taxon>
        <taxon>Actinomycetota</taxon>
        <taxon>Actinomycetes</taxon>
        <taxon>Mycobacteriales</taxon>
        <taxon>Corynebacteriaceae</taxon>
        <taxon>Corynebacterium</taxon>
    </lineage>
</organism>
<protein>
    <recommendedName>
        <fullName evidence="1">Protein RecA</fullName>
    </recommendedName>
    <alternativeName>
        <fullName evidence="1">Recombinase A</fullName>
    </alternativeName>
</protein>
<reference key="1">
    <citation type="journal article" date="2010" name="BMC Genomics">
        <title>Complete genome sequence and lifestyle of black-pigmented Corynebacterium aurimucosum ATCC 700975 (formerly C. nigricans CN-1) isolated from a vaginal swab of a woman with spontaneous abortion.</title>
        <authorList>
            <person name="Trost E."/>
            <person name="Gotker S."/>
            <person name="Schneider J."/>
            <person name="Schneiker-Bekel S."/>
            <person name="Szczepanowski R."/>
            <person name="Tilker A."/>
            <person name="Viehoever P."/>
            <person name="Arnold W."/>
            <person name="Bekel T."/>
            <person name="Blom J."/>
            <person name="Gartemann K.H."/>
            <person name="Linke B."/>
            <person name="Goesmann A."/>
            <person name="Puhler A."/>
            <person name="Shukla S.K."/>
            <person name="Tauch A."/>
        </authorList>
    </citation>
    <scope>NUCLEOTIDE SEQUENCE [LARGE SCALE GENOMIC DNA]</scope>
    <source>
        <strain>ATCC 700975 / DSM 44827 / CIP 107346 / CN-1</strain>
    </source>
</reference>
<keyword id="KW-0067">ATP-binding</keyword>
<keyword id="KW-0963">Cytoplasm</keyword>
<keyword id="KW-0227">DNA damage</keyword>
<keyword id="KW-0233">DNA recombination</keyword>
<keyword id="KW-0234">DNA repair</keyword>
<keyword id="KW-0238">DNA-binding</keyword>
<keyword id="KW-0547">Nucleotide-binding</keyword>
<keyword id="KW-1185">Reference proteome</keyword>
<keyword id="KW-0742">SOS response</keyword>
<evidence type="ECO:0000255" key="1">
    <source>
        <dbReference type="HAMAP-Rule" id="MF_00268"/>
    </source>
</evidence>
<name>RECA_CORA7</name>
<proteinExistence type="inferred from homology"/>
<gene>
    <name evidence="1" type="primary">recA</name>
    <name type="ordered locus">cauri_1500</name>
</gene>
<accession>C3PGY9</accession>
<feature type="chain" id="PRO_1000193300" description="Protein RecA">
    <location>
        <begin position="1"/>
        <end position="377"/>
    </location>
</feature>
<feature type="binding site" evidence="1">
    <location>
        <begin position="76"/>
        <end position="83"/>
    </location>
    <ligand>
        <name>ATP</name>
        <dbReference type="ChEBI" id="CHEBI:30616"/>
    </ligand>
</feature>
<sequence>MATKKKSSAANKGDDRQKALDAAMAMIEKDFGKGAVMRLGDDDRPPIQAISSGNTAIDIALGVGGFPRGRIVEIYGPESSGKTTVALHAIASAQKTGGIAAFIDAEHALDPEYARLLGVDTDNLLVSQPDTGEQALEIADMLVRSGAIDIIVIDSVAALTPKAEIEGEMGDSHVGLQARLMSQALRKMTGALYNSGTTAIFINQLREKIGVMFGSPETTTGGKALKFYASVRCDIRRIQTLKDGQDAIGNRTKLKVVKNKVSPPFKIAEFDIMYGEGISRESSIIDLGVEHGFIKKSGSWFTYEGDQLGQGKEKARNFLKDNPDLADEIEKKIFVKLGVGAAAAEAGEDVAMDVPGADDPLTDEAVDLVPNVDFDDD</sequence>